<gene>
    <name evidence="1" type="primary">murC</name>
    <name type="ordered locus">Tola_0526</name>
</gene>
<feature type="chain" id="PRO_1000202192" description="UDP-N-acetylmuramate--L-alanine ligase">
    <location>
        <begin position="1"/>
        <end position="484"/>
    </location>
</feature>
<feature type="binding site" evidence="1">
    <location>
        <begin position="126"/>
        <end position="132"/>
    </location>
    <ligand>
        <name>ATP</name>
        <dbReference type="ChEBI" id="CHEBI:30616"/>
    </ligand>
</feature>
<accession>C4LA26</accession>
<proteinExistence type="inferred from homology"/>
<organism>
    <name type="scientific">Tolumonas auensis (strain DSM 9187 / NBRC 110442 / TA 4)</name>
    <dbReference type="NCBI Taxonomy" id="595494"/>
    <lineage>
        <taxon>Bacteria</taxon>
        <taxon>Pseudomonadati</taxon>
        <taxon>Pseudomonadota</taxon>
        <taxon>Gammaproteobacteria</taxon>
        <taxon>Aeromonadales</taxon>
        <taxon>Aeromonadaceae</taxon>
        <taxon>Tolumonas</taxon>
    </lineage>
</organism>
<dbReference type="EC" id="6.3.2.8" evidence="1"/>
<dbReference type="EMBL" id="CP001616">
    <property type="protein sequence ID" value="ACQ92155.1"/>
    <property type="molecule type" value="Genomic_DNA"/>
</dbReference>
<dbReference type="RefSeq" id="WP_012728754.1">
    <property type="nucleotide sequence ID" value="NC_012691.1"/>
</dbReference>
<dbReference type="SMR" id="C4LA26"/>
<dbReference type="STRING" id="595494.Tola_0526"/>
<dbReference type="KEGG" id="tau:Tola_0526"/>
<dbReference type="eggNOG" id="COG0773">
    <property type="taxonomic scope" value="Bacteria"/>
</dbReference>
<dbReference type="HOGENOM" id="CLU_028104_2_2_6"/>
<dbReference type="OrthoDB" id="9804126at2"/>
<dbReference type="UniPathway" id="UPA00219"/>
<dbReference type="Proteomes" id="UP000009073">
    <property type="component" value="Chromosome"/>
</dbReference>
<dbReference type="GO" id="GO:0005737">
    <property type="term" value="C:cytoplasm"/>
    <property type="evidence" value="ECO:0007669"/>
    <property type="project" value="UniProtKB-SubCell"/>
</dbReference>
<dbReference type="GO" id="GO:0005524">
    <property type="term" value="F:ATP binding"/>
    <property type="evidence" value="ECO:0007669"/>
    <property type="project" value="UniProtKB-UniRule"/>
</dbReference>
<dbReference type="GO" id="GO:0008763">
    <property type="term" value="F:UDP-N-acetylmuramate-L-alanine ligase activity"/>
    <property type="evidence" value="ECO:0007669"/>
    <property type="project" value="UniProtKB-UniRule"/>
</dbReference>
<dbReference type="GO" id="GO:0051301">
    <property type="term" value="P:cell division"/>
    <property type="evidence" value="ECO:0007669"/>
    <property type="project" value="UniProtKB-KW"/>
</dbReference>
<dbReference type="GO" id="GO:0071555">
    <property type="term" value="P:cell wall organization"/>
    <property type="evidence" value="ECO:0007669"/>
    <property type="project" value="UniProtKB-KW"/>
</dbReference>
<dbReference type="GO" id="GO:0009252">
    <property type="term" value="P:peptidoglycan biosynthetic process"/>
    <property type="evidence" value="ECO:0007669"/>
    <property type="project" value="UniProtKB-UniRule"/>
</dbReference>
<dbReference type="GO" id="GO:0008360">
    <property type="term" value="P:regulation of cell shape"/>
    <property type="evidence" value="ECO:0007669"/>
    <property type="project" value="UniProtKB-KW"/>
</dbReference>
<dbReference type="FunFam" id="3.40.1190.10:FF:000001">
    <property type="entry name" value="UDP-N-acetylmuramate--L-alanine ligase"/>
    <property type="match status" value="1"/>
</dbReference>
<dbReference type="FunFam" id="3.40.50.720:FF:000046">
    <property type="entry name" value="UDP-N-acetylmuramate--L-alanine ligase"/>
    <property type="match status" value="1"/>
</dbReference>
<dbReference type="Gene3D" id="3.90.190.20">
    <property type="entry name" value="Mur ligase, C-terminal domain"/>
    <property type="match status" value="1"/>
</dbReference>
<dbReference type="Gene3D" id="3.40.1190.10">
    <property type="entry name" value="Mur-like, catalytic domain"/>
    <property type="match status" value="1"/>
</dbReference>
<dbReference type="Gene3D" id="3.40.50.720">
    <property type="entry name" value="NAD(P)-binding Rossmann-like Domain"/>
    <property type="match status" value="1"/>
</dbReference>
<dbReference type="HAMAP" id="MF_00046">
    <property type="entry name" value="MurC"/>
    <property type="match status" value="1"/>
</dbReference>
<dbReference type="InterPro" id="IPR036565">
    <property type="entry name" value="Mur-like_cat_sf"/>
</dbReference>
<dbReference type="InterPro" id="IPR004101">
    <property type="entry name" value="Mur_ligase_C"/>
</dbReference>
<dbReference type="InterPro" id="IPR036615">
    <property type="entry name" value="Mur_ligase_C_dom_sf"/>
</dbReference>
<dbReference type="InterPro" id="IPR013221">
    <property type="entry name" value="Mur_ligase_cen"/>
</dbReference>
<dbReference type="InterPro" id="IPR000713">
    <property type="entry name" value="Mur_ligase_N"/>
</dbReference>
<dbReference type="InterPro" id="IPR050061">
    <property type="entry name" value="MurCDEF_pg_biosynth"/>
</dbReference>
<dbReference type="InterPro" id="IPR005758">
    <property type="entry name" value="UDP-N-AcMur_Ala_ligase_MurC"/>
</dbReference>
<dbReference type="NCBIfam" id="TIGR01082">
    <property type="entry name" value="murC"/>
    <property type="match status" value="1"/>
</dbReference>
<dbReference type="PANTHER" id="PTHR43445:SF3">
    <property type="entry name" value="UDP-N-ACETYLMURAMATE--L-ALANINE LIGASE"/>
    <property type="match status" value="1"/>
</dbReference>
<dbReference type="PANTHER" id="PTHR43445">
    <property type="entry name" value="UDP-N-ACETYLMURAMATE--L-ALANINE LIGASE-RELATED"/>
    <property type="match status" value="1"/>
</dbReference>
<dbReference type="Pfam" id="PF01225">
    <property type="entry name" value="Mur_ligase"/>
    <property type="match status" value="1"/>
</dbReference>
<dbReference type="Pfam" id="PF02875">
    <property type="entry name" value="Mur_ligase_C"/>
    <property type="match status" value="1"/>
</dbReference>
<dbReference type="Pfam" id="PF08245">
    <property type="entry name" value="Mur_ligase_M"/>
    <property type="match status" value="1"/>
</dbReference>
<dbReference type="SUPFAM" id="SSF51984">
    <property type="entry name" value="MurCD N-terminal domain"/>
    <property type="match status" value="1"/>
</dbReference>
<dbReference type="SUPFAM" id="SSF53623">
    <property type="entry name" value="MurD-like peptide ligases, catalytic domain"/>
    <property type="match status" value="1"/>
</dbReference>
<dbReference type="SUPFAM" id="SSF53244">
    <property type="entry name" value="MurD-like peptide ligases, peptide-binding domain"/>
    <property type="match status" value="1"/>
</dbReference>
<protein>
    <recommendedName>
        <fullName evidence="1">UDP-N-acetylmuramate--L-alanine ligase</fullName>
        <ecNumber evidence="1">6.3.2.8</ecNumber>
    </recommendedName>
    <alternativeName>
        <fullName evidence="1">UDP-N-acetylmuramoyl-L-alanine synthetase</fullName>
    </alternativeName>
</protein>
<evidence type="ECO:0000255" key="1">
    <source>
        <dbReference type="HAMAP-Rule" id="MF_00046"/>
    </source>
</evidence>
<keyword id="KW-0067">ATP-binding</keyword>
<keyword id="KW-0131">Cell cycle</keyword>
<keyword id="KW-0132">Cell division</keyword>
<keyword id="KW-0133">Cell shape</keyword>
<keyword id="KW-0961">Cell wall biogenesis/degradation</keyword>
<keyword id="KW-0963">Cytoplasm</keyword>
<keyword id="KW-0436">Ligase</keyword>
<keyword id="KW-0547">Nucleotide-binding</keyword>
<keyword id="KW-0573">Peptidoglycan synthesis</keyword>
<keyword id="KW-1185">Reference proteome</keyword>
<name>MURC_TOLAT</name>
<reference key="1">
    <citation type="submission" date="2009-05" db="EMBL/GenBank/DDBJ databases">
        <title>Complete sequence of Tolumonas auensis DSM 9187.</title>
        <authorList>
            <consortium name="US DOE Joint Genome Institute"/>
            <person name="Lucas S."/>
            <person name="Copeland A."/>
            <person name="Lapidus A."/>
            <person name="Glavina del Rio T."/>
            <person name="Tice H."/>
            <person name="Bruce D."/>
            <person name="Goodwin L."/>
            <person name="Pitluck S."/>
            <person name="Chertkov O."/>
            <person name="Brettin T."/>
            <person name="Detter J.C."/>
            <person name="Han C."/>
            <person name="Larimer F."/>
            <person name="Land M."/>
            <person name="Hauser L."/>
            <person name="Kyrpides N."/>
            <person name="Mikhailova N."/>
            <person name="Spring S."/>
            <person name="Beller H."/>
        </authorList>
    </citation>
    <scope>NUCLEOTIDE SEQUENCE [LARGE SCALE GENOMIC DNA]</scope>
    <source>
        <strain>DSM 9187 / NBRC 110442 / TA 4</strain>
    </source>
</reference>
<comment type="function">
    <text evidence="1">Cell wall formation.</text>
</comment>
<comment type="catalytic activity">
    <reaction evidence="1">
        <text>UDP-N-acetyl-alpha-D-muramate + L-alanine + ATP = UDP-N-acetyl-alpha-D-muramoyl-L-alanine + ADP + phosphate + H(+)</text>
        <dbReference type="Rhea" id="RHEA:23372"/>
        <dbReference type="ChEBI" id="CHEBI:15378"/>
        <dbReference type="ChEBI" id="CHEBI:30616"/>
        <dbReference type="ChEBI" id="CHEBI:43474"/>
        <dbReference type="ChEBI" id="CHEBI:57972"/>
        <dbReference type="ChEBI" id="CHEBI:70757"/>
        <dbReference type="ChEBI" id="CHEBI:83898"/>
        <dbReference type="ChEBI" id="CHEBI:456216"/>
        <dbReference type="EC" id="6.3.2.8"/>
    </reaction>
</comment>
<comment type="pathway">
    <text evidence="1">Cell wall biogenesis; peptidoglycan biosynthesis.</text>
</comment>
<comment type="subcellular location">
    <subcellularLocation>
        <location evidence="1">Cytoplasm</location>
    </subcellularLocation>
</comment>
<comment type="similarity">
    <text evidence="1">Belongs to the MurCDEF family.</text>
</comment>
<sequence length="484" mass="52416">MTKVELAKLRTMIPEMRRVRRIHFIGIGGAGMGGIAEVLANEGYQISGSDIANNRVTEHLASLGAEIQIGHKPENVHGASVVVVSTAIHGDNPEVMAARELRIPVVRRAEMLAELMRYRHGIAIAGTHGKTTTTSLIASVYAQAGADPTFVIGGLLNSAGTNARLGTSRYLIAEADESDASFLHLQPMVAIVTNIEADHMDTYGGDFTKLRATFLEFLHNLPFYGLAVVCIDDPVIRELLPEIGRATITYGYSEDADVQVQEFVQEGSQSQFRLRLQDGSFLPLRLNLPGRHNALNAAATVAVALEDHIPTDAIVDALAQFAGVGRRFQQYGEFDTGAGKVLLVDDYGHHPTEVRATLAATRAAWPERRLVLVFQPHRYTRTRDLYDDFAEVLAKVDVLIMLDVYAAGEDPIPGADGRSLCRSIRQRGTLDPIFVATPAEVPGVLADVLKDGDVVLTQGAGNVGQLSRKLAELKLSINAMKTAI</sequence>